<organism>
    <name type="scientific">Xylella fastidiosa (strain M23)</name>
    <dbReference type="NCBI Taxonomy" id="405441"/>
    <lineage>
        <taxon>Bacteria</taxon>
        <taxon>Pseudomonadati</taxon>
        <taxon>Pseudomonadota</taxon>
        <taxon>Gammaproteobacteria</taxon>
        <taxon>Lysobacterales</taxon>
        <taxon>Lysobacteraceae</taxon>
        <taxon>Xylella</taxon>
    </lineage>
</organism>
<sequence length="602" mass="66714">MSSDPMRNIRNFSIIAHVDHGKSTLADRIIQLCGGLEAREMEAQVLDSNPIERERGITIKAQSVSLLYKAQDGQNYHLNLIDTPGHVDFSYEVSRSLAACEGALLVVDASQGVEAQSVANCYTAVEQGLEVVPILNKIDLPTADTERAKAEIETVIGIDASEAVAVSAKTGLYVEQVLEAIVQRIPAPQPRDTEKLQALIIDSWFDNYLGVVSLVRVMQGEITPGNKLLVMSTGRSHQVDAVGVFTPKRKTLAKLTAGEVGWVTASIKDVHGAPVGDTLTLTSDPAPKPLPGFQEVQPRVFAGLFPVDAEDYPDLREALEKLRLNDAALRFEPENSEAMGFGFRCGFLGMLHMEIVQERLEREYDLNLITTAPTVIYEVLKNDGTLVAMDNPAKMPPINQINEIREPIIRSNILTPPDYVGAVITLCEEKRGSQISITYLGNQVQVAYELPMAEVVLDFFDKLKSVTRGYASLDYHFLRFQEGPFVRVDTLINGDRVDALSVIVHRHQAERRGRELCEKMKDLIPRQMFDVAIQAAIGSQIISRSTVKAMRKNVLAKCYGGDISRKKKLLEKQKEGKKRMKQIGRVEIPQEAFLAVLQIDNK</sequence>
<gene>
    <name evidence="1" type="primary">lepA</name>
    <name type="ordered locus">XfasM23_1372</name>
</gene>
<name>LEPA_XYLF2</name>
<keyword id="KW-0997">Cell inner membrane</keyword>
<keyword id="KW-1003">Cell membrane</keyword>
<keyword id="KW-0342">GTP-binding</keyword>
<keyword id="KW-0378">Hydrolase</keyword>
<keyword id="KW-0472">Membrane</keyword>
<keyword id="KW-0547">Nucleotide-binding</keyword>
<keyword id="KW-0648">Protein biosynthesis</keyword>
<evidence type="ECO:0000255" key="1">
    <source>
        <dbReference type="HAMAP-Rule" id="MF_00071"/>
    </source>
</evidence>
<feature type="chain" id="PRO_1000092465" description="Elongation factor 4">
    <location>
        <begin position="1"/>
        <end position="602"/>
    </location>
</feature>
<feature type="domain" description="tr-type G">
    <location>
        <begin position="7"/>
        <end position="189"/>
    </location>
</feature>
<feature type="binding site" evidence="1">
    <location>
        <begin position="19"/>
        <end position="24"/>
    </location>
    <ligand>
        <name>GTP</name>
        <dbReference type="ChEBI" id="CHEBI:37565"/>
    </ligand>
</feature>
<feature type="binding site" evidence="1">
    <location>
        <begin position="136"/>
        <end position="139"/>
    </location>
    <ligand>
        <name>GTP</name>
        <dbReference type="ChEBI" id="CHEBI:37565"/>
    </ligand>
</feature>
<accession>B2I601</accession>
<comment type="function">
    <text evidence="1">Required for accurate and efficient protein synthesis under certain stress conditions. May act as a fidelity factor of the translation reaction, by catalyzing a one-codon backward translocation of tRNAs on improperly translocated ribosomes. Back-translocation proceeds from a post-translocation (POST) complex to a pre-translocation (PRE) complex, thus giving elongation factor G a second chance to translocate the tRNAs correctly. Binds to ribosomes in a GTP-dependent manner.</text>
</comment>
<comment type="catalytic activity">
    <reaction evidence="1">
        <text>GTP + H2O = GDP + phosphate + H(+)</text>
        <dbReference type="Rhea" id="RHEA:19669"/>
        <dbReference type="ChEBI" id="CHEBI:15377"/>
        <dbReference type="ChEBI" id="CHEBI:15378"/>
        <dbReference type="ChEBI" id="CHEBI:37565"/>
        <dbReference type="ChEBI" id="CHEBI:43474"/>
        <dbReference type="ChEBI" id="CHEBI:58189"/>
        <dbReference type="EC" id="3.6.5.n1"/>
    </reaction>
</comment>
<comment type="subcellular location">
    <subcellularLocation>
        <location evidence="1">Cell inner membrane</location>
        <topology evidence="1">Peripheral membrane protein</topology>
        <orientation evidence="1">Cytoplasmic side</orientation>
    </subcellularLocation>
</comment>
<comment type="similarity">
    <text evidence="1">Belongs to the TRAFAC class translation factor GTPase superfamily. Classic translation factor GTPase family. LepA subfamily.</text>
</comment>
<dbReference type="EC" id="3.6.5.n1" evidence="1"/>
<dbReference type="EMBL" id="CP001011">
    <property type="protein sequence ID" value="ACB92790.1"/>
    <property type="molecule type" value="Genomic_DNA"/>
</dbReference>
<dbReference type="SMR" id="B2I601"/>
<dbReference type="KEGG" id="xfn:XfasM23_1372"/>
<dbReference type="HOGENOM" id="CLU_009995_3_3_6"/>
<dbReference type="Proteomes" id="UP000001698">
    <property type="component" value="Chromosome"/>
</dbReference>
<dbReference type="GO" id="GO:0005886">
    <property type="term" value="C:plasma membrane"/>
    <property type="evidence" value="ECO:0007669"/>
    <property type="project" value="UniProtKB-SubCell"/>
</dbReference>
<dbReference type="GO" id="GO:0005525">
    <property type="term" value="F:GTP binding"/>
    <property type="evidence" value="ECO:0007669"/>
    <property type="project" value="UniProtKB-UniRule"/>
</dbReference>
<dbReference type="GO" id="GO:0003924">
    <property type="term" value="F:GTPase activity"/>
    <property type="evidence" value="ECO:0007669"/>
    <property type="project" value="UniProtKB-UniRule"/>
</dbReference>
<dbReference type="GO" id="GO:0097216">
    <property type="term" value="F:guanosine tetraphosphate binding"/>
    <property type="evidence" value="ECO:0007669"/>
    <property type="project" value="UniProtKB-ARBA"/>
</dbReference>
<dbReference type="GO" id="GO:0043022">
    <property type="term" value="F:ribosome binding"/>
    <property type="evidence" value="ECO:0007669"/>
    <property type="project" value="UniProtKB-UniRule"/>
</dbReference>
<dbReference type="GO" id="GO:0003746">
    <property type="term" value="F:translation elongation factor activity"/>
    <property type="evidence" value="ECO:0007669"/>
    <property type="project" value="UniProtKB-UniRule"/>
</dbReference>
<dbReference type="GO" id="GO:0045727">
    <property type="term" value="P:positive regulation of translation"/>
    <property type="evidence" value="ECO:0007669"/>
    <property type="project" value="UniProtKB-UniRule"/>
</dbReference>
<dbReference type="CDD" id="cd03699">
    <property type="entry name" value="EF4_II"/>
    <property type="match status" value="1"/>
</dbReference>
<dbReference type="CDD" id="cd16260">
    <property type="entry name" value="EF4_III"/>
    <property type="match status" value="1"/>
</dbReference>
<dbReference type="CDD" id="cd01890">
    <property type="entry name" value="LepA"/>
    <property type="match status" value="1"/>
</dbReference>
<dbReference type="CDD" id="cd03709">
    <property type="entry name" value="lepA_C"/>
    <property type="match status" value="1"/>
</dbReference>
<dbReference type="FunFam" id="3.40.50.300:FF:000078">
    <property type="entry name" value="Elongation factor 4"/>
    <property type="match status" value="1"/>
</dbReference>
<dbReference type="FunFam" id="2.40.30.10:FF:000015">
    <property type="entry name" value="Translation factor GUF1, mitochondrial"/>
    <property type="match status" value="1"/>
</dbReference>
<dbReference type="FunFam" id="3.30.70.240:FF:000007">
    <property type="entry name" value="Translation factor GUF1, mitochondrial"/>
    <property type="match status" value="1"/>
</dbReference>
<dbReference type="FunFam" id="3.30.70.2570:FF:000001">
    <property type="entry name" value="Translation factor GUF1, mitochondrial"/>
    <property type="match status" value="1"/>
</dbReference>
<dbReference type="FunFam" id="3.30.70.870:FF:000004">
    <property type="entry name" value="Translation factor GUF1, mitochondrial"/>
    <property type="match status" value="1"/>
</dbReference>
<dbReference type="Gene3D" id="3.30.70.240">
    <property type="match status" value="1"/>
</dbReference>
<dbReference type="Gene3D" id="3.30.70.2570">
    <property type="entry name" value="Elongation factor 4, C-terminal domain"/>
    <property type="match status" value="1"/>
</dbReference>
<dbReference type="Gene3D" id="3.30.70.870">
    <property type="entry name" value="Elongation Factor G (Translational Gtpase), domain 3"/>
    <property type="match status" value="1"/>
</dbReference>
<dbReference type="Gene3D" id="3.40.50.300">
    <property type="entry name" value="P-loop containing nucleotide triphosphate hydrolases"/>
    <property type="match status" value="1"/>
</dbReference>
<dbReference type="Gene3D" id="2.40.30.10">
    <property type="entry name" value="Translation factors"/>
    <property type="match status" value="1"/>
</dbReference>
<dbReference type="HAMAP" id="MF_00071">
    <property type="entry name" value="LepA"/>
    <property type="match status" value="1"/>
</dbReference>
<dbReference type="InterPro" id="IPR006297">
    <property type="entry name" value="EF-4"/>
</dbReference>
<dbReference type="InterPro" id="IPR035647">
    <property type="entry name" value="EFG_III/V"/>
</dbReference>
<dbReference type="InterPro" id="IPR000640">
    <property type="entry name" value="EFG_V-like"/>
</dbReference>
<dbReference type="InterPro" id="IPR004161">
    <property type="entry name" value="EFTu-like_2"/>
</dbReference>
<dbReference type="InterPro" id="IPR031157">
    <property type="entry name" value="G_TR_CS"/>
</dbReference>
<dbReference type="InterPro" id="IPR038363">
    <property type="entry name" value="LepA_C_sf"/>
</dbReference>
<dbReference type="InterPro" id="IPR013842">
    <property type="entry name" value="LepA_CTD"/>
</dbReference>
<dbReference type="InterPro" id="IPR035654">
    <property type="entry name" value="LepA_IV"/>
</dbReference>
<dbReference type="InterPro" id="IPR027417">
    <property type="entry name" value="P-loop_NTPase"/>
</dbReference>
<dbReference type="InterPro" id="IPR005225">
    <property type="entry name" value="Small_GTP-bd"/>
</dbReference>
<dbReference type="InterPro" id="IPR000795">
    <property type="entry name" value="T_Tr_GTP-bd_dom"/>
</dbReference>
<dbReference type="InterPro" id="IPR009000">
    <property type="entry name" value="Transl_B-barrel_sf"/>
</dbReference>
<dbReference type="NCBIfam" id="TIGR01393">
    <property type="entry name" value="lepA"/>
    <property type="match status" value="1"/>
</dbReference>
<dbReference type="NCBIfam" id="TIGR00231">
    <property type="entry name" value="small_GTP"/>
    <property type="match status" value="1"/>
</dbReference>
<dbReference type="PANTHER" id="PTHR43512:SF4">
    <property type="entry name" value="TRANSLATION FACTOR GUF1 HOMOLOG, CHLOROPLASTIC"/>
    <property type="match status" value="1"/>
</dbReference>
<dbReference type="PANTHER" id="PTHR43512">
    <property type="entry name" value="TRANSLATION FACTOR GUF1-RELATED"/>
    <property type="match status" value="1"/>
</dbReference>
<dbReference type="Pfam" id="PF00679">
    <property type="entry name" value="EFG_C"/>
    <property type="match status" value="1"/>
</dbReference>
<dbReference type="Pfam" id="PF00009">
    <property type="entry name" value="GTP_EFTU"/>
    <property type="match status" value="1"/>
</dbReference>
<dbReference type="Pfam" id="PF03144">
    <property type="entry name" value="GTP_EFTU_D2"/>
    <property type="match status" value="1"/>
</dbReference>
<dbReference type="Pfam" id="PF06421">
    <property type="entry name" value="LepA_C"/>
    <property type="match status" value="1"/>
</dbReference>
<dbReference type="PRINTS" id="PR00315">
    <property type="entry name" value="ELONGATNFCT"/>
</dbReference>
<dbReference type="SMART" id="SM00838">
    <property type="entry name" value="EFG_C"/>
    <property type="match status" value="1"/>
</dbReference>
<dbReference type="SUPFAM" id="SSF54980">
    <property type="entry name" value="EF-G C-terminal domain-like"/>
    <property type="match status" value="2"/>
</dbReference>
<dbReference type="SUPFAM" id="SSF52540">
    <property type="entry name" value="P-loop containing nucleoside triphosphate hydrolases"/>
    <property type="match status" value="1"/>
</dbReference>
<dbReference type="SUPFAM" id="SSF50447">
    <property type="entry name" value="Translation proteins"/>
    <property type="match status" value="1"/>
</dbReference>
<dbReference type="PROSITE" id="PS00301">
    <property type="entry name" value="G_TR_1"/>
    <property type="match status" value="1"/>
</dbReference>
<dbReference type="PROSITE" id="PS51722">
    <property type="entry name" value="G_TR_2"/>
    <property type="match status" value="1"/>
</dbReference>
<proteinExistence type="inferred from homology"/>
<protein>
    <recommendedName>
        <fullName evidence="1">Elongation factor 4</fullName>
        <shortName evidence="1">EF-4</shortName>
        <ecNumber evidence="1">3.6.5.n1</ecNumber>
    </recommendedName>
    <alternativeName>
        <fullName evidence="1">Ribosomal back-translocase LepA</fullName>
    </alternativeName>
</protein>
<reference key="1">
    <citation type="journal article" date="2010" name="J. Bacteriol.">
        <title>Whole genome sequences of two Xylella fastidiosa strains (M12 and M23) causing almond leaf scorch disease in California.</title>
        <authorList>
            <person name="Chen J."/>
            <person name="Xie G."/>
            <person name="Han S."/>
            <person name="Chertkov O."/>
            <person name="Sims D."/>
            <person name="Civerolo E.L."/>
        </authorList>
    </citation>
    <scope>NUCLEOTIDE SEQUENCE [LARGE SCALE GENOMIC DNA]</scope>
    <source>
        <strain>M23</strain>
    </source>
</reference>